<dbReference type="EMBL" id="CP000526">
    <property type="protein sequence ID" value="ABM52028.1"/>
    <property type="molecule type" value="Genomic_DNA"/>
</dbReference>
<dbReference type="RefSeq" id="WP_004194034.1">
    <property type="nucleotide sequence ID" value="NC_008785.1"/>
</dbReference>
<dbReference type="SMR" id="A1V0U6"/>
<dbReference type="GeneID" id="92980018"/>
<dbReference type="KEGG" id="bmv:BMASAVP1_A0500"/>
<dbReference type="HOGENOM" id="CLU_005965_2_1_4"/>
<dbReference type="GO" id="GO:0005524">
    <property type="term" value="F:ATP binding"/>
    <property type="evidence" value="ECO:0007669"/>
    <property type="project" value="UniProtKB-UniRule"/>
</dbReference>
<dbReference type="GO" id="GO:0140662">
    <property type="term" value="F:ATP-dependent protein folding chaperone"/>
    <property type="evidence" value="ECO:0007669"/>
    <property type="project" value="InterPro"/>
</dbReference>
<dbReference type="GO" id="GO:0051082">
    <property type="term" value="F:unfolded protein binding"/>
    <property type="evidence" value="ECO:0007669"/>
    <property type="project" value="InterPro"/>
</dbReference>
<dbReference type="CDD" id="cd10234">
    <property type="entry name" value="ASKHA_NBD_HSP70_DnaK-like"/>
    <property type="match status" value="1"/>
</dbReference>
<dbReference type="FunFam" id="2.60.34.10:FF:000014">
    <property type="entry name" value="Chaperone protein DnaK HSP70"/>
    <property type="match status" value="1"/>
</dbReference>
<dbReference type="FunFam" id="1.20.1270.10:FF:000001">
    <property type="entry name" value="Molecular chaperone DnaK"/>
    <property type="match status" value="1"/>
</dbReference>
<dbReference type="FunFam" id="3.30.420.40:FF:000004">
    <property type="entry name" value="Molecular chaperone DnaK"/>
    <property type="match status" value="1"/>
</dbReference>
<dbReference type="FunFam" id="3.90.640.10:FF:000003">
    <property type="entry name" value="Molecular chaperone DnaK"/>
    <property type="match status" value="1"/>
</dbReference>
<dbReference type="Gene3D" id="1.20.1270.10">
    <property type="match status" value="1"/>
</dbReference>
<dbReference type="Gene3D" id="3.30.420.40">
    <property type="match status" value="2"/>
</dbReference>
<dbReference type="Gene3D" id="3.90.640.10">
    <property type="entry name" value="Actin, Chain A, domain 4"/>
    <property type="match status" value="1"/>
</dbReference>
<dbReference type="Gene3D" id="2.60.34.10">
    <property type="entry name" value="Substrate Binding Domain Of DNAk, Chain A, domain 1"/>
    <property type="match status" value="1"/>
</dbReference>
<dbReference type="HAMAP" id="MF_00332">
    <property type="entry name" value="DnaK"/>
    <property type="match status" value="1"/>
</dbReference>
<dbReference type="InterPro" id="IPR043129">
    <property type="entry name" value="ATPase_NBD"/>
</dbReference>
<dbReference type="InterPro" id="IPR012725">
    <property type="entry name" value="Chaperone_DnaK"/>
</dbReference>
<dbReference type="InterPro" id="IPR018181">
    <property type="entry name" value="Heat_shock_70_CS"/>
</dbReference>
<dbReference type="InterPro" id="IPR029048">
    <property type="entry name" value="HSP70_C_sf"/>
</dbReference>
<dbReference type="InterPro" id="IPR029047">
    <property type="entry name" value="HSP70_peptide-bd_sf"/>
</dbReference>
<dbReference type="InterPro" id="IPR013126">
    <property type="entry name" value="Hsp_70_fam"/>
</dbReference>
<dbReference type="NCBIfam" id="NF001413">
    <property type="entry name" value="PRK00290.1"/>
    <property type="match status" value="1"/>
</dbReference>
<dbReference type="NCBIfam" id="NF003520">
    <property type="entry name" value="PRK05183.1"/>
    <property type="match status" value="1"/>
</dbReference>
<dbReference type="NCBIfam" id="TIGR02350">
    <property type="entry name" value="prok_dnaK"/>
    <property type="match status" value="1"/>
</dbReference>
<dbReference type="PANTHER" id="PTHR19375">
    <property type="entry name" value="HEAT SHOCK PROTEIN 70KDA"/>
    <property type="match status" value="1"/>
</dbReference>
<dbReference type="Pfam" id="PF00012">
    <property type="entry name" value="HSP70"/>
    <property type="match status" value="1"/>
</dbReference>
<dbReference type="PRINTS" id="PR00301">
    <property type="entry name" value="HEATSHOCK70"/>
</dbReference>
<dbReference type="SUPFAM" id="SSF53067">
    <property type="entry name" value="Actin-like ATPase domain"/>
    <property type="match status" value="2"/>
</dbReference>
<dbReference type="SUPFAM" id="SSF100934">
    <property type="entry name" value="Heat shock protein 70kD (HSP70), C-terminal subdomain"/>
    <property type="match status" value="1"/>
</dbReference>
<dbReference type="SUPFAM" id="SSF100920">
    <property type="entry name" value="Heat shock protein 70kD (HSP70), peptide-binding domain"/>
    <property type="match status" value="1"/>
</dbReference>
<dbReference type="PROSITE" id="PS00297">
    <property type="entry name" value="HSP70_1"/>
    <property type="match status" value="1"/>
</dbReference>
<dbReference type="PROSITE" id="PS00329">
    <property type="entry name" value="HSP70_2"/>
    <property type="match status" value="1"/>
</dbReference>
<dbReference type="PROSITE" id="PS01036">
    <property type="entry name" value="HSP70_3"/>
    <property type="match status" value="1"/>
</dbReference>
<gene>
    <name evidence="1" type="primary">dnaK</name>
    <name type="ordered locus">BMASAVP1_A0500</name>
</gene>
<accession>A1V0U6</accession>
<proteinExistence type="inferred from homology"/>
<keyword id="KW-0067">ATP-binding</keyword>
<keyword id="KW-0143">Chaperone</keyword>
<keyword id="KW-0547">Nucleotide-binding</keyword>
<keyword id="KW-0597">Phosphoprotein</keyword>
<keyword id="KW-0346">Stress response</keyword>
<organism>
    <name type="scientific">Burkholderia mallei (strain SAVP1)</name>
    <dbReference type="NCBI Taxonomy" id="320388"/>
    <lineage>
        <taxon>Bacteria</taxon>
        <taxon>Pseudomonadati</taxon>
        <taxon>Pseudomonadota</taxon>
        <taxon>Betaproteobacteria</taxon>
        <taxon>Burkholderiales</taxon>
        <taxon>Burkholderiaceae</taxon>
        <taxon>Burkholderia</taxon>
        <taxon>pseudomallei group</taxon>
    </lineage>
</organism>
<comment type="function">
    <text evidence="1">Acts as a chaperone.</text>
</comment>
<comment type="induction">
    <text evidence="1">By stress conditions e.g. heat shock.</text>
</comment>
<comment type="similarity">
    <text evidence="1">Belongs to the heat shock protein 70 family.</text>
</comment>
<sequence length="650" mass="69702">MGKIIGIDLGTTNSCVAIMEGNQVKVIENSEGARTTPSIIAYMDDNEVLVGAPAKRQSVTNPKNTLFAVKRLIGRRFEEKEVQKDIGLMPYAIIKADNGDAWVEAHGEKLAPPQVSAEVLRKMKKTAEDYLGEPVTEAVITVPAYFNDSQRQATKDAGRIAGLEVKRIINEPTAAALAFGLDKAEKGDRKIAVYDLGGGTFDVSIIEIADVDGEMQFEVLSTNGDTFLGGEDFDQRIIDYIIGEFKKEQGVDLSKDVLALQRLKEAAEKAKIELSSSQQTEINLPYITADASGPKHLNLKVTRAKLEALVEDLVERTIEPCRTAIKDAGVKVSDIDDVILVGGQTRMPKVQEKVKEFFGKEPRRDVNPDEAVAVGAAIQGQVLSGDRKDVLLLDVTPLSLGIETLGGVMTKMINKNTTIPTKHAQVYSTADDNQGAVTIKVFQGEREMAAGNKLLGEFNLEGIPPAPRGVPQIEVTFDIDANGILHVGAKDKATGKENKITIKANSGLSEAEIEKMVKDAEANAAEDHKLRELAESRNQGDALVHSTKKALTEYGDKLEAGEKEKIEAALKELEDVLKNASSDKAAIDAKVEAVATASQKLGEKMYADMQAQQAGAAGAAGAAAEGASAQGGAQPADDVVDADFKEVKKD</sequence>
<protein>
    <recommendedName>
        <fullName evidence="1">Chaperone protein DnaK</fullName>
    </recommendedName>
    <alternativeName>
        <fullName evidence="1">HSP70</fullName>
    </alternativeName>
    <alternativeName>
        <fullName evidence="1">Heat shock 70 kDa protein</fullName>
    </alternativeName>
    <alternativeName>
        <fullName evidence="1">Heat shock protein 70</fullName>
    </alternativeName>
</protein>
<name>DNAK_BURMS</name>
<reference key="1">
    <citation type="journal article" date="2010" name="Genome Biol. Evol.">
        <title>Continuing evolution of Burkholderia mallei through genome reduction and large-scale rearrangements.</title>
        <authorList>
            <person name="Losada L."/>
            <person name="Ronning C.M."/>
            <person name="DeShazer D."/>
            <person name="Woods D."/>
            <person name="Fedorova N."/>
            <person name="Kim H.S."/>
            <person name="Shabalina S.A."/>
            <person name="Pearson T.R."/>
            <person name="Brinkac L."/>
            <person name="Tan P."/>
            <person name="Nandi T."/>
            <person name="Crabtree J."/>
            <person name="Badger J."/>
            <person name="Beckstrom-Sternberg S."/>
            <person name="Saqib M."/>
            <person name="Schutzer S.E."/>
            <person name="Keim P."/>
            <person name="Nierman W.C."/>
        </authorList>
    </citation>
    <scope>NUCLEOTIDE SEQUENCE [LARGE SCALE GENOMIC DNA]</scope>
    <source>
        <strain>SAVP1</strain>
    </source>
</reference>
<evidence type="ECO:0000255" key="1">
    <source>
        <dbReference type="HAMAP-Rule" id="MF_00332"/>
    </source>
</evidence>
<evidence type="ECO:0000256" key="2">
    <source>
        <dbReference type="SAM" id="MobiDB-lite"/>
    </source>
</evidence>
<feature type="chain" id="PRO_1000059522" description="Chaperone protein DnaK">
    <location>
        <begin position="1"/>
        <end position="650"/>
    </location>
</feature>
<feature type="region of interest" description="Disordered" evidence="2">
    <location>
        <begin position="611"/>
        <end position="650"/>
    </location>
</feature>
<feature type="compositionally biased region" description="Low complexity" evidence="2">
    <location>
        <begin position="611"/>
        <end position="636"/>
    </location>
</feature>
<feature type="modified residue" description="Phosphothreonine; by autocatalysis" evidence="1">
    <location>
        <position position="200"/>
    </location>
</feature>